<name>YDIK_BACSU</name>
<comment type="subcellular location">
    <subcellularLocation>
        <location evidence="2">Cell membrane</location>
        <topology evidence="2">Lipid-anchor</topology>
    </subcellularLocation>
</comment>
<sequence>MRNPVVWGMIYFAVGCIFTYLAASSPGSMWSFYSILLMVFAAYNISISFKMFAFSFKIKKNQK</sequence>
<organism>
    <name type="scientific">Bacillus subtilis (strain 168)</name>
    <dbReference type="NCBI Taxonomy" id="224308"/>
    <lineage>
        <taxon>Bacteria</taxon>
        <taxon>Bacillati</taxon>
        <taxon>Bacillota</taxon>
        <taxon>Bacilli</taxon>
        <taxon>Bacillales</taxon>
        <taxon>Bacillaceae</taxon>
        <taxon>Bacillus</taxon>
    </lineage>
</organism>
<proteinExistence type="inferred from homology"/>
<gene>
    <name type="primary">ydiK</name>
    <name type="ordered locus">BSU06000</name>
</gene>
<reference key="1">
    <citation type="journal article" date="1997" name="Microbiology">
        <title>Nucleotide sequence and analysis of the phoB-rrnE-groESL region of the Bacillus subtilis chromosome.</title>
        <authorList>
            <person name="Sadaie Y."/>
            <person name="Yata K."/>
            <person name="Fujita M."/>
            <person name="Sagai H."/>
            <person name="Itaya M."/>
            <person name="Kasahara Y."/>
            <person name="Ogasawara N."/>
        </authorList>
    </citation>
    <scope>NUCLEOTIDE SEQUENCE [GENOMIC DNA]</scope>
    <source>
        <strain>168 / JH642</strain>
    </source>
</reference>
<reference key="2">
    <citation type="journal article" date="1997" name="Nature">
        <title>The complete genome sequence of the Gram-positive bacterium Bacillus subtilis.</title>
        <authorList>
            <person name="Kunst F."/>
            <person name="Ogasawara N."/>
            <person name="Moszer I."/>
            <person name="Albertini A.M."/>
            <person name="Alloni G."/>
            <person name="Azevedo V."/>
            <person name="Bertero M.G."/>
            <person name="Bessieres P."/>
            <person name="Bolotin A."/>
            <person name="Borchert S."/>
            <person name="Borriss R."/>
            <person name="Boursier L."/>
            <person name="Brans A."/>
            <person name="Braun M."/>
            <person name="Brignell S.C."/>
            <person name="Bron S."/>
            <person name="Brouillet S."/>
            <person name="Bruschi C.V."/>
            <person name="Caldwell B."/>
            <person name="Capuano V."/>
            <person name="Carter N.M."/>
            <person name="Choi S.-K."/>
            <person name="Codani J.-J."/>
            <person name="Connerton I.F."/>
            <person name="Cummings N.J."/>
            <person name="Daniel R.A."/>
            <person name="Denizot F."/>
            <person name="Devine K.M."/>
            <person name="Duesterhoeft A."/>
            <person name="Ehrlich S.D."/>
            <person name="Emmerson P.T."/>
            <person name="Entian K.-D."/>
            <person name="Errington J."/>
            <person name="Fabret C."/>
            <person name="Ferrari E."/>
            <person name="Foulger D."/>
            <person name="Fritz C."/>
            <person name="Fujita M."/>
            <person name="Fujita Y."/>
            <person name="Fuma S."/>
            <person name="Galizzi A."/>
            <person name="Galleron N."/>
            <person name="Ghim S.-Y."/>
            <person name="Glaser P."/>
            <person name="Goffeau A."/>
            <person name="Golightly E.J."/>
            <person name="Grandi G."/>
            <person name="Guiseppi G."/>
            <person name="Guy B.J."/>
            <person name="Haga K."/>
            <person name="Haiech J."/>
            <person name="Harwood C.R."/>
            <person name="Henaut A."/>
            <person name="Hilbert H."/>
            <person name="Holsappel S."/>
            <person name="Hosono S."/>
            <person name="Hullo M.-F."/>
            <person name="Itaya M."/>
            <person name="Jones L.-M."/>
            <person name="Joris B."/>
            <person name="Karamata D."/>
            <person name="Kasahara Y."/>
            <person name="Klaerr-Blanchard M."/>
            <person name="Klein C."/>
            <person name="Kobayashi Y."/>
            <person name="Koetter P."/>
            <person name="Koningstein G."/>
            <person name="Krogh S."/>
            <person name="Kumano M."/>
            <person name="Kurita K."/>
            <person name="Lapidus A."/>
            <person name="Lardinois S."/>
            <person name="Lauber J."/>
            <person name="Lazarevic V."/>
            <person name="Lee S.-M."/>
            <person name="Levine A."/>
            <person name="Liu H."/>
            <person name="Masuda S."/>
            <person name="Mauel C."/>
            <person name="Medigue C."/>
            <person name="Medina N."/>
            <person name="Mellado R.P."/>
            <person name="Mizuno M."/>
            <person name="Moestl D."/>
            <person name="Nakai S."/>
            <person name="Noback M."/>
            <person name="Noone D."/>
            <person name="O'Reilly M."/>
            <person name="Ogawa K."/>
            <person name="Ogiwara A."/>
            <person name="Oudega B."/>
            <person name="Park S.-H."/>
            <person name="Parro V."/>
            <person name="Pohl T.M."/>
            <person name="Portetelle D."/>
            <person name="Porwollik S."/>
            <person name="Prescott A.M."/>
            <person name="Presecan E."/>
            <person name="Pujic P."/>
            <person name="Purnelle B."/>
            <person name="Rapoport G."/>
            <person name="Rey M."/>
            <person name="Reynolds S."/>
            <person name="Rieger M."/>
            <person name="Rivolta C."/>
            <person name="Rocha E."/>
            <person name="Roche B."/>
            <person name="Rose M."/>
            <person name="Sadaie Y."/>
            <person name="Sato T."/>
            <person name="Scanlan E."/>
            <person name="Schleich S."/>
            <person name="Schroeter R."/>
            <person name="Scoffone F."/>
            <person name="Sekiguchi J."/>
            <person name="Sekowska A."/>
            <person name="Seror S.J."/>
            <person name="Serror P."/>
            <person name="Shin B.-S."/>
            <person name="Soldo B."/>
            <person name="Sorokin A."/>
            <person name="Tacconi E."/>
            <person name="Takagi T."/>
            <person name="Takahashi H."/>
            <person name="Takemaru K."/>
            <person name="Takeuchi M."/>
            <person name="Tamakoshi A."/>
            <person name="Tanaka T."/>
            <person name="Terpstra P."/>
            <person name="Tognoni A."/>
            <person name="Tosato V."/>
            <person name="Uchiyama S."/>
            <person name="Vandenbol M."/>
            <person name="Vannier F."/>
            <person name="Vassarotti A."/>
            <person name="Viari A."/>
            <person name="Wambutt R."/>
            <person name="Wedler E."/>
            <person name="Wedler H."/>
            <person name="Weitzenegger T."/>
            <person name="Winters P."/>
            <person name="Wipat A."/>
            <person name="Yamamoto H."/>
            <person name="Yamane K."/>
            <person name="Yasumoto K."/>
            <person name="Yata K."/>
            <person name="Yoshida K."/>
            <person name="Yoshikawa H.-F."/>
            <person name="Zumstein E."/>
            <person name="Yoshikawa H."/>
            <person name="Danchin A."/>
        </authorList>
    </citation>
    <scope>NUCLEOTIDE SEQUENCE [LARGE SCALE GENOMIC DNA]</scope>
    <source>
        <strain>168</strain>
    </source>
</reference>
<accession>O05524</accession>
<evidence type="ECO:0000255" key="1"/>
<evidence type="ECO:0000255" key="2">
    <source>
        <dbReference type="PROSITE-ProRule" id="PRU00303"/>
    </source>
</evidence>
<feature type="signal peptide" evidence="2">
    <location>
        <begin position="1"/>
        <end position="15"/>
    </location>
</feature>
<feature type="chain" id="PRO_0000013696" description="Uncharacterized lipoprotein YdiK">
    <location>
        <begin position="16"/>
        <end position="63"/>
    </location>
</feature>
<feature type="transmembrane region" description="Helical" evidence="1">
    <location>
        <begin position="34"/>
        <end position="56"/>
    </location>
</feature>
<feature type="lipid moiety-binding region" description="N-palmitoyl cysteine" evidence="2">
    <location>
        <position position="16"/>
    </location>
</feature>
<feature type="lipid moiety-binding region" description="S-diacylglycerol cysteine" evidence="2">
    <location>
        <position position="16"/>
    </location>
</feature>
<keyword id="KW-1003">Cell membrane</keyword>
<keyword id="KW-0449">Lipoprotein</keyword>
<keyword id="KW-0472">Membrane</keyword>
<keyword id="KW-0564">Palmitate</keyword>
<keyword id="KW-1185">Reference proteome</keyword>
<keyword id="KW-0732">Signal</keyword>
<keyword id="KW-0812">Transmembrane</keyword>
<keyword id="KW-1133">Transmembrane helix</keyword>
<protein>
    <recommendedName>
        <fullName>Uncharacterized lipoprotein YdiK</fullName>
    </recommendedName>
</protein>
<dbReference type="EMBL" id="D88802">
    <property type="protein sequence ID" value="BAA19724.1"/>
    <property type="molecule type" value="Genomic_DNA"/>
</dbReference>
<dbReference type="EMBL" id="AL009126">
    <property type="protein sequence ID" value="CAB12419.1"/>
    <property type="molecule type" value="Genomic_DNA"/>
</dbReference>
<dbReference type="PIR" id="D69787">
    <property type="entry name" value="D69787"/>
</dbReference>
<dbReference type="RefSeq" id="NP_388481.1">
    <property type="nucleotide sequence ID" value="NC_000964.3"/>
</dbReference>
<dbReference type="RefSeq" id="WP_003225680.1">
    <property type="nucleotide sequence ID" value="NZ_OZ025638.1"/>
</dbReference>
<dbReference type="SMR" id="O05524"/>
<dbReference type="FunCoup" id="O05524">
    <property type="interactions" value="11"/>
</dbReference>
<dbReference type="STRING" id="224308.BSU06000"/>
<dbReference type="PaxDb" id="224308-BSU06000"/>
<dbReference type="EnsemblBacteria" id="CAB12419">
    <property type="protein sequence ID" value="CAB12419"/>
    <property type="gene ID" value="BSU_06000"/>
</dbReference>
<dbReference type="GeneID" id="939870"/>
<dbReference type="KEGG" id="bsu:BSU06000"/>
<dbReference type="PATRIC" id="fig|224308.179.peg.645"/>
<dbReference type="eggNOG" id="ENOG5030MRQ">
    <property type="taxonomic scope" value="Bacteria"/>
</dbReference>
<dbReference type="InParanoid" id="O05524"/>
<dbReference type="OrthoDB" id="2355666at2"/>
<dbReference type="BioCyc" id="BSUB:BSU06000-MONOMER"/>
<dbReference type="PRO" id="PR:O05524"/>
<dbReference type="Proteomes" id="UP000001570">
    <property type="component" value="Chromosome"/>
</dbReference>
<dbReference type="GO" id="GO:0005886">
    <property type="term" value="C:plasma membrane"/>
    <property type="evidence" value="ECO:0007669"/>
    <property type="project" value="UniProtKB-SubCell"/>
</dbReference>
<dbReference type="InterPro" id="IPR025426">
    <property type="entry name" value="DUF4305"/>
</dbReference>
<dbReference type="Pfam" id="PF14146">
    <property type="entry name" value="DUF4305"/>
    <property type="match status" value="1"/>
</dbReference>
<dbReference type="PROSITE" id="PS51257">
    <property type="entry name" value="PROKAR_LIPOPROTEIN"/>
    <property type="match status" value="1"/>
</dbReference>